<name>Y053_NPVOP</name>
<organism>
    <name type="scientific">Orgyia pseudotsugata multicapsid polyhedrosis virus</name>
    <name type="common">OpMNPV</name>
    <dbReference type="NCBI Taxonomy" id="262177"/>
    <lineage>
        <taxon>Viruses</taxon>
        <taxon>Viruses incertae sedis</taxon>
        <taxon>Naldaviricetes</taxon>
        <taxon>Lefavirales</taxon>
        <taxon>Baculoviridae</taxon>
        <taxon>Alphabaculovirus</taxon>
        <taxon>Alphabaculovirus orpseudotsugatae</taxon>
    </lineage>
</organism>
<dbReference type="EMBL" id="U75930">
    <property type="protein sequence ID" value="AAC59055.1"/>
    <property type="molecule type" value="Genomic_DNA"/>
</dbReference>
<dbReference type="RefSeq" id="NP_046212.1">
    <property type="nucleotide sequence ID" value="NC_001875.2"/>
</dbReference>
<dbReference type="KEGG" id="vg:912047"/>
<dbReference type="OrthoDB" id="12505at10239"/>
<dbReference type="Proteomes" id="UP000009248">
    <property type="component" value="Genome"/>
</dbReference>
<dbReference type="InterPro" id="IPR008573">
    <property type="entry name" value="Baculovirus_U-box/Ring-like"/>
</dbReference>
<dbReference type="Pfam" id="PF05883">
    <property type="entry name" value="Baculo_RING"/>
    <property type="match status" value="1"/>
</dbReference>
<gene>
    <name type="ORF">ORF56</name>
</gene>
<reference key="1">
    <citation type="journal article" date="1997" name="Virology">
        <title>The sequence of the Orgyia pseudotsugata multinucleocapsid nuclear polyhedrosis virus genome.</title>
        <authorList>
            <person name="Ahrens C.H."/>
            <person name="Russell R.R."/>
            <person name="Funk C.J."/>
            <person name="Evans J."/>
            <person name="Harwood S."/>
            <person name="Rohrmann G.F."/>
        </authorList>
    </citation>
    <scope>NUCLEOTIDE SEQUENCE [LARGE SCALE GENOMIC DNA]</scope>
</reference>
<organismHost>
    <name type="scientific">Orgyia pseudotsugata</name>
    <name type="common">Douglas-fir tussock moth</name>
    <dbReference type="NCBI Taxonomy" id="33414"/>
</organismHost>
<proteinExistence type="predicted"/>
<protein>
    <recommendedName>
        <fullName>Uncharacterized 17.0 kDa protein</fullName>
    </recommendedName>
</protein>
<accession>O10310</accession>
<keyword id="KW-1185">Reference proteome</keyword>
<sequence length="146" mass="16971">MLLTVYLKDKQYYLFKLFREIWPSCTTECRICLETLGTEGGVVGVPDNGLLNLDKMFHAECIERWKRGRNRDPFNRAIKYYFAFPPPTLHECKALLEHTRGFIGDDEMDRVYSLVHQRVTTEDALDVELNFARFFKDDARAVGGGQ</sequence>
<feature type="chain" id="PRO_0000132986" description="Uncharacterized 17.0 kDa protein">
    <location>
        <begin position="1"/>
        <end position="146"/>
    </location>
</feature>